<comment type="function">
    <text evidence="1">Catalyzes the reversible interconversion of serine and glycine with tetrahydrofolate (THF) serving as the one-carbon carrier. This reaction serves as the major source of one-carbon groups required for the biosynthesis of purines, thymidylate, methionine, and other important biomolecules. Also exhibits THF-independent aldolase activity toward beta-hydroxyamino acids, producing glycine and aldehydes, via a retro-aldol mechanism.</text>
</comment>
<comment type="catalytic activity">
    <reaction evidence="1">
        <text>(6R)-5,10-methylene-5,6,7,8-tetrahydrofolate + glycine + H2O = (6S)-5,6,7,8-tetrahydrofolate + L-serine</text>
        <dbReference type="Rhea" id="RHEA:15481"/>
        <dbReference type="ChEBI" id="CHEBI:15377"/>
        <dbReference type="ChEBI" id="CHEBI:15636"/>
        <dbReference type="ChEBI" id="CHEBI:33384"/>
        <dbReference type="ChEBI" id="CHEBI:57305"/>
        <dbReference type="ChEBI" id="CHEBI:57453"/>
        <dbReference type="EC" id="2.1.2.1"/>
    </reaction>
</comment>
<comment type="cofactor">
    <cofactor evidence="1">
        <name>pyridoxal 5'-phosphate</name>
        <dbReference type="ChEBI" id="CHEBI:597326"/>
    </cofactor>
</comment>
<comment type="pathway">
    <text evidence="1">One-carbon metabolism; tetrahydrofolate interconversion.</text>
</comment>
<comment type="pathway">
    <text evidence="1">Amino-acid biosynthesis; glycine biosynthesis; glycine from L-serine: step 1/1.</text>
</comment>
<comment type="subunit">
    <text evidence="1">Homodimer.</text>
</comment>
<comment type="subcellular location">
    <subcellularLocation>
        <location evidence="1">Cytoplasm</location>
    </subcellularLocation>
</comment>
<comment type="similarity">
    <text evidence="1">Belongs to the SHMT family.</text>
</comment>
<gene>
    <name evidence="1" type="primary">glyA</name>
    <name type="ordered locus">Cthe_1058</name>
</gene>
<reference key="1">
    <citation type="submission" date="2007-02" db="EMBL/GenBank/DDBJ databases">
        <title>Complete sequence of Clostridium thermocellum ATCC 27405.</title>
        <authorList>
            <consortium name="US DOE Joint Genome Institute"/>
            <person name="Copeland A."/>
            <person name="Lucas S."/>
            <person name="Lapidus A."/>
            <person name="Barry K."/>
            <person name="Detter J.C."/>
            <person name="Glavina del Rio T."/>
            <person name="Hammon N."/>
            <person name="Israni S."/>
            <person name="Dalin E."/>
            <person name="Tice H."/>
            <person name="Pitluck S."/>
            <person name="Chertkov O."/>
            <person name="Brettin T."/>
            <person name="Bruce D."/>
            <person name="Han C."/>
            <person name="Tapia R."/>
            <person name="Gilna P."/>
            <person name="Schmutz J."/>
            <person name="Larimer F."/>
            <person name="Land M."/>
            <person name="Hauser L."/>
            <person name="Kyrpides N."/>
            <person name="Mikhailova N."/>
            <person name="Wu J.H.D."/>
            <person name="Newcomb M."/>
            <person name="Richardson P."/>
        </authorList>
    </citation>
    <scope>NUCLEOTIDE SEQUENCE [LARGE SCALE GENOMIC DNA]</scope>
    <source>
        <strain>ATCC 27405 / DSM 1237 / JCM 9322 / NBRC 103400 / NCIMB 10682 / NRRL B-4536 / VPI 7372</strain>
    </source>
</reference>
<keyword id="KW-0028">Amino-acid biosynthesis</keyword>
<keyword id="KW-0963">Cytoplasm</keyword>
<keyword id="KW-0554">One-carbon metabolism</keyword>
<keyword id="KW-0663">Pyridoxal phosphate</keyword>
<keyword id="KW-1185">Reference proteome</keyword>
<keyword id="KW-0808">Transferase</keyword>
<evidence type="ECO:0000255" key="1">
    <source>
        <dbReference type="HAMAP-Rule" id="MF_00051"/>
    </source>
</evidence>
<name>GLYA_ACET2</name>
<protein>
    <recommendedName>
        <fullName evidence="1">Serine hydroxymethyltransferase</fullName>
        <shortName evidence="1">SHMT</shortName>
        <shortName evidence="1">Serine methylase</shortName>
        <ecNumber evidence="1">2.1.2.1</ecNumber>
    </recommendedName>
</protein>
<dbReference type="EC" id="2.1.2.1" evidence="1"/>
<dbReference type="EMBL" id="CP000568">
    <property type="protein sequence ID" value="ABN52290.1"/>
    <property type="molecule type" value="Genomic_DNA"/>
</dbReference>
<dbReference type="RefSeq" id="WP_003515671.1">
    <property type="nucleotide sequence ID" value="NC_009012.1"/>
</dbReference>
<dbReference type="SMR" id="A3DEB1"/>
<dbReference type="STRING" id="203119.Cthe_1058"/>
<dbReference type="GeneID" id="35803573"/>
<dbReference type="KEGG" id="cth:Cthe_1058"/>
<dbReference type="eggNOG" id="COG0112">
    <property type="taxonomic scope" value="Bacteria"/>
</dbReference>
<dbReference type="HOGENOM" id="CLU_022477_2_1_9"/>
<dbReference type="OrthoDB" id="9803846at2"/>
<dbReference type="UniPathway" id="UPA00193"/>
<dbReference type="UniPathway" id="UPA00288">
    <property type="reaction ID" value="UER01023"/>
</dbReference>
<dbReference type="Proteomes" id="UP000002145">
    <property type="component" value="Chromosome"/>
</dbReference>
<dbReference type="GO" id="GO:0005829">
    <property type="term" value="C:cytosol"/>
    <property type="evidence" value="ECO:0007669"/>
    <property type="project" value="TreeGrafter"/>
</dbReference>
<dbReference type="GO" id="GO:0004372">
    <property type="term" value="F:glycine hydroxymethyltransferase activity"/>
    <property type="evidence" value="ECO:0007669"/>
    <property type="project" value="UniProtKB-UniRule"/>
</dbReference>
<dbReference type="GO" id="GO:0030170">
    <property type="term" value="F:pyridoxal phosphate binding"/>
    <property type="evidence" value="ECO:0007669"/>
    <property type="project" value="UniProtKB-UniRule"/>
</dbReference>
<dbReference type="GO" id="GO:0019264">
    <property type="term" value="P:glycine biosynthetic process from serine"/>
    <property type="evidence" value="ECO:0007669"/>
    <property type="project" value="UniProtKB-UniRule"/>
</dbReference>
<dbReference type="GO" id="GO:0035999">
    <property type="term" value="P:tetrahydrofolate interconversion"/>
    <property type="evidence" value="ECO:0007669"/>
    <property type="project" value="UniProtKB-UniRule"/>
</dbReference>
<dbReference type="CDD" id="cd00378">
    <property type="entry name" value="SHMT"/>
    <property type="match status" value="1"/>
</dbReference>
<dbReference type="FunFam" id="3.40.640.10:FF:000001">
    <property type="entry name" value="Serine hydroxymethyltransferase"/>
    <property type="match status" value="1"/>
</dbReference>
<dbReference type="FunFam" id="3.90.1150.10:FF:000003">
    <property type="entry name" value="Serine hydroxymethyltransferase"/>
    <property type="match status" value="1"/>
</dbReference>
<dbReference type="Gene3D" id="3.90.1150.10">
    <property type="entry name" value="Aspartate Aminotransferase, domain 1"/>
    <property type="match status" value="1"/>
</dbReference>
<dbReference type="Gene3D" id="3.40.640.10">
    <property type="entry name" value="Type I PLP-dependent aspartate aminotransferase-like (Major domain)"/>
    <property type="match status" value="1"/>
</dbReference>
<dbReference type="HAMAP" id="MF_00051">
    <property type="entry name" value="SHMT"/>
    <property type="match status" value="1"/>
</dbReference>
<dbReference type="InterPro" id="IPR015424">
    <property type="entry name" value="PyrdxlP-dep_Trfase"/>
</dbReference>
<dbReference type="InterPro" id="IPR015421">
    <property type="entry name" value="PyrdxlP-dep_Trfase_major"/>
</dbReference>
<dbReference type="InterPro" id="IPR015422">
    <property type="entry name" value="PyrdxlP-dep_Trfase_small"/>
</dbReference>
<dbReference type="InterPro" id="IPR001085">
    <property type="entry name" value="Ser_HO-MeTrfase"/>
</dbReference>
<dbReference type="InterPro" id="IPR049943">
    <property type="entry name" value="Ser_HO-MeTrfase-like"/>
</dbReference>
<dbReference type="InterPro" id="IPR019798">
    <property type="entry name" value="Ser_HO-MeTrfase_PLP_BS"/>
</dbReference>
<dbReference type="InterPro" id="IPR039429">
    <property type="entry name" value="SHMT-like_dom"/>
</dbReference>
<dbReference type="NCBIfam" id="NF000586">
    <property type="entry name" value="PRK00011.1"/>
    <property type="match status" value="1"/>
</dbReference>
<dbReference type="PANTHER" id="PTHR11680">
    <property type="entry name" value="SERINE HYDROXYMETHYLTRANSFERASE"/>
    <property type="match status" value="1"/>
</dbReference>
<dbReference type="PANTHER" id="PTHR11680:SF35">
    <property type="entry name" value="SERINE HYDROXYMETHYLTRANSFERASE 1"/>
    <property type="match status" value="1"/>
</dbReference>
<dbReference type="Pfam" id="PF00464">
    <property type="entry name" value="SHMT"/>
    <property type="match status" value="1"/>
</dbReference>
<dbReference type="PIRSF" id="PIRSF000412">
    <property type="entry name" value="SHMT"/>
    <property type="match status" value="1"/>
</dbReference>
<dbReference type="SUPFAM" id="SSF53383">
    <property type="entry name" value="PLP-dependent transferases"/>
    <property type="match status" value="1"/>
</dbReference>
<dbReference type="PROSITE" id="PS00096">
    <property type="entry name" value="SHMT"/>
    <property type="match status" value="1"/>
</dbReference>
<feature type="chain" id="PRO_0000369914" description="Serine hydroxymethyltransferase">
    <location>
        <begin position="1"/>
        <end position="412"/>
    </location>
</feature>
<feature type="binding site" evidence="1">
    <location>
        <position position="120"/>
    </location>
    <ligand>
        <name>(6S)-5,6,7,8-tetrahydrofolate</name>
        <dbReference type="ChEBI" id="CHEBI:57453"/>
    </ligand>
</feature>
<feature type="binding site" evidence="1">
    <location>
        <begin position="124"/>
        <end position="126"/>
    </location>
    <ligand>
        <name>(6S)-5,6,7,8-tetrahydrofolate</name>
        <dbReference type="ChEBI" id="CHEBI:57453"/>
    </ligand>
</feature>
<feature type="binding site" evidence="1">
    <location>
        <begin position="352"/>
        <end position="354"/>
    </location>
    <ligand>
        <name>(6S)-5,6,7,8-tetrahydrofolate</name>
        <dbReference type="ChEBI" id="CHEBI:57453"/>
    </ligand>
</feature>
<feature type="site" description="Plays an important role in substrate specificity" evidence="1">
    <location>
        <position position="228"/>
    </location>
</feature>
<feature type="modified residue" description="N6-(pyridoxal phosphate)lysine" evidence="1">
    <location>
        <position position="229"/>
    </location>
</feature>
<accession>A3DEB1</accession>
<proteinExistence type="inferred from homology"/>
<sequence>MFNLNEISKIDPEVAKAIELEVNRQRNKIELIASENFVSKAVIEAMGTPLTNKYAEGYPGKRYYGGCEFVDIIENLAIERAKKIFGAEHANVQPHSGAQANMAVFFAVLNPGDTILGMNLSHGGHLSHGSPVNMSGKYYNVISYGVRKEDCRIDYDEVRKLAKEHRPKLIVAGASAYPRIIDFKAFRDIADEVGAYLMVDIAHIAGLVAAGLHPNPVPYAHFVTTTTHKTLRGPRGGLILCGNEHAKMIDKAVFPGIQGGPLMHVIAAKAVSFAEVLTDEFKQYQQQIVKNAKTLANALMEKGIDLVSGGTDNHLMLVDLRNKGLTGKYVQHILDEVCITVNKNGIPFDPESPFVTSGIRIGTPAVTARGMKEEDMVEIADLINLTITDYENSKEKVKERVRMLCEKYPLYQ</sequence>
<organism>
    <name type="scientific">Acetivibrio thermocellus (strain ATCC 27405 / DSM 1237 / JCM 9322 / NBRC 103400 / NCIMB 10682 / NRRL B-4536 / VPI 7372)</name>
    <name type="common">Clostridium thermocellum</name>
    <dbReference type="NCBI Taxonomy" id="203119"/>
    <lineage>
        <taxon>Bacteria</taxon>
        <taxon>Bacillati</taxon>
        <taxon>Bacillota</taxon>
        <taxon>Clostridia</taxon>
        <taxon>Eubacteriales</taxon>
        <taxon>Oscillospiraceae</taxon>
        <taxon>Acetivibrio</taxon>
    </lineage>
</organism>